<name>Y443_MYCGE</name>
<gene>
    <name type="ordered locus">MG443</name>
</gene>
<dbReference type="EMBL" id="L43967">
    <property type="protein sequence ID" value="AAC72463.1"/>
    <property type="molecule type" value="Genomic_DNA"/>
</dbReference>
<dbReference type="PIR" id="I64248">
    <property type="entry name" value="I64248"/>
</dbReference>
<dbReference type="RefSeq" id="WP_010869483.1">
    <property type="nucleotide sequence ID" value="NC_000908.2"/>
</dbReference>
<dbReference type="SMR" id="P47681"/>
<dbReference type="FunCoup" id="P47681">
    <property type="interactions" value="19"/>
</dbReference>
<dbReference type="STRING" id="243273.MG_443"/>
<dbReference type="GeneID" id="88282623"/>
<dbReference type="KEGG" id="mge:MG_443"/>
<dbReference type="eggNOG" id="COG1284">
    <property type="taxonomic scope" value="Bacteria"/>
</dbReference>
<dbReference type="HOGENOM" id="CLU_043038_0_0_14"/>
<dbReference type="InParanoid" id="P47681"/>
<dbReference type="OrthoDB" id="387512at2"/>
<dbReference type="BioCyc" id="MGEN243273:G1GJ2-536-MONOMER"/>
<dbReference type="Proteomes" id="UP000000807">
    <property type="component" value="Chromosome"/>
</dbReference>
<dbReference type="GO" id="GO:0005886">
    <property type="term" value="C:plasma membrane"/>
    <property type="evidence" value="ECO:0007669"/>
    <property type="project" value="UniProtKB-SubCell"/>
</dbReference>
<dbReference type="Gene3D" id="3.30.70.120">
    <property type="match status" value="1"/>
</dbReference>
<dbReference type="InterPro" id="IPR019264">
    <property type="entry name" value="DUF2179"/>
</dbReference>
<dbReference type="InterPro" id="IPR015867">
    <property type="entry name" value="N-reg_PII/ATP_PRibTrfase_C"/>
</dbReference>
<dbReference type="InterPro" id="IPR051461">
    <property type="entry name" value="UPF0750_membrane"/>
</dbReference>
<dbReference type="InterPro" id="IPR003740">
    <property type="entry name" value="YitT"/>
</dbReference>
<dbReference type="PANTHER" id="PTHR33545:SF5">
    <property type="entry name" value="UPF0750 MEMBRANE PROTEIN YITT"/>
    <property type="match status" value="1"/>
</dbReference>
<dbReference type="PANTHER" id="PTHR33545">
    <property type="entry name" value="UPF0750 MEMBRANE PROTEIN YITT-RELATED"/>
    <property type="match status" value="1"/>
</dbReference>
<dbReference type="Pfam" id="PF10035">
    <property type="entry name" value="DUF2179"/>
    <property type="match status" value="1"/>
</dbReference>
<dbReference type="Pfam" id="PF02588">
    <property type="entry name" value="YitT_membrane"/>
    <property type="match status" value="1"/>
</dbReference>
<keyword id="KW-1003">Cell membrane</keyword>
<keyword id="KW-0472">Membrane</keyword>
<keyword id="KW-1185">Reference proteome</keyword>
<keyword id="KW-0812">Transmembrane</keyword>
<keyword id="KW-1133">Transmembrane helix</keyword>
<protein>
    <recommendedName>
        <fullName>Uncharacterized protein MG443</fullName>
    </recommendedName>
</protein>
<accession>P47681</accession>
<feature type="chain" id="PRO_0000210616" description="Uncharacterized protein MG443">
    <location>
        <begin position="1"/>
        <end position="395"/>
    </location>
</feature>
<feature type="transmembrane region" description="Helical" evidence="1">
    <location>
        <begin position="42"/>
        <end position="62"/>
    </location>
</feature>
<feature type="transmembrane region" description="Helical" evidence="1">
    <location>
        <begin position="67"/>
        <end position="87"/>
    </location>
</feature>
<feature type="transmembrane region" description="Helical" evidence="1">
    <location>
        <begin position="97"/>
        <end position="117"/>
    </location>
</feature>
<feature type="transmembrane region" description="Helical" evidence="1">
    <location>
        <begin position="128"/>
        <end position="148"/>
    </location>
</feature>
<feature type="transmembrane region" description="Helical" evidence="1">
    <location>
        <begin position="196"/>
        <end position="216"/>
    </location>
</feature>
<feature type="transmembrane region" description="Helical" evidence="1">
    <location>
        <begin position="241"/>
        <end position="261"/>
    </location>
</feature>
<feature type="transmembrane region" description="Helical" evidence="1">
    <location>
        <begin position="281"/>
        <end position="301"/>
    </location>
</feature>
<organism>
    <name type="scientific">Mycoplasma genitalium (strain ATCC 33530 / DSM 19775 / NCTC 10195 / G37)</name>
    <name type="common">Mycoplasmoides genitalium</name>
    <dbReference type="NCBI Taxonomy" id="243273"/>
    <lineage>
        <taxon>Bacteria</taxon>
        <taxon>Bacillati</taxon>
        <taxon>Mycoplasmatota</taxon>
        <taxon>Mycoplasmoidales</taxon>
        <taxon>Mycoplasmoidaceae</taxon>
        <taxon>Mycoplasmoides</taxon>
    </lineage>
</organism>
<proteinExistence type="predicted"/>
<reference key="1">
    <citation type="journal article" date="1995" name="Science">
        <title>The minimal gene complement of Mycoplasma genitalium.</title>
        <authorList>
            <person name="Fraser C.M."/>
            <person name="Gocayne J.D."/>
            <person name="White O."/>
            <person name="Adams M.D."/>
            <person name="Clayton R.A."/>
            <person name="Fleischmann R.D."/>
            <person name="Bult C.J."/>
            <person name="Kerlavage A.R."/>
            <person name="Sutton G.G."/>
            <person name="Kelley J.M."/>
            <person name="Fritchman J.L."/>
            <person name="Weidman J.F."/>
            <person name="Small K.V."/>
            <person name="Sandusky M."/>
            <person name="Fuhrmann J.L."/>
            <person name="Nguyen D.T."/>
            <person name="Utterback T.R."/>
            <person name="Saudek D.M."/>
            <person name="Phillips C.A."/>
            <person name="Merrick J.M."/>
            <person name="Tomb J.-F."/>
            <person name="Dougherty B.A."/>
            <person name="Bott K.F."/>
            <person name="Hu P.-C."/>
            <person name="Lucier T.S."/>
            <person name="Peterson S.N."/>
            <person name="Smith H.O."/>
            <person name="Hutchison C.A. III"/>
            <person name="Venter J.C."/>
        </authorList>
    </citation>
    <scope>NUCLEOTIDE SEQUENCE [LARGE SCALE GENOMIC DNA]</scope>
    <source>
        <strain>ATCC 33530 / DSM 19775 / NCTC 10195 / G37</strain>
    </source>
</reference>
<comment type="subcellular location">
    <subcellularLocation>
        <location evidence="2">Cell membrane</location>
        <topology evidence="2">Multi-pass membrane protein</topology>
    </subcellularLocation>
</comment>
<sequence length="395" mass="44659">MKFFNNLFKKESKITVASGSKRVRISNSFLMFSNLYEAKKPLKYVLVYLLSIINAFLLLIFIQKTGLYSFGISSLTQGFARLVFVLLKSFDETQRLLIFNILYWLLYVFINIPLIIFSYKKIGKNFTILSTHFVVASNVFGFLISIIPGSDNLPPMLASITDTNFWKAAKDLNQSAGFVPFLWSDTSQGNVIISTFIYAAIYGFYNGISVSLLYILGGSAGGADFLTQYYARKKNRSVGSILFYVNSFILIIAILIGSFVAGSLLLQDVNNYRDSAWEVSLFFSPNLIATFFSILLTGTVVSYLFPRYNFAEIKVFTDKLEEVRKALLSDNANHSLSIQETLGGYSLLKKKMIVSVSMYVEIPHLIKIIRQIDKDCLVSITRIRGIDGHIYLRQN</sequence>
<evidence type="ECO:0000255" key="1"/>
<evidence type="ECO:0000305" key="2"/>